<reference key="1">
    <citation type="journal article" date="2000" name="Nature">
        <title>DNA sequence of both chromosomes of the cholera pathogen Vibrio cholerae.</title>
        <authorList>
            <person name="Heidelberg J.F."/>
            <person name="Eisen J.A."/>
            <person name="Nelson W.C."/>
            <person name="Clayton R.A."/>
            <person name="Gwinn M.L."/>
            <person name="Dodson R.J."/>
            <person name="Haft D.H."/>
            <person name="Hickey E.K."/>
            <person name="Peterson J.D."/>
            <person name="Umayam L.A."/>
            <person name="Gill S.R."/>
            <person name="Nelson K.E."/>
            <person name="Read T.D."/>
            <person name="Tettelin H."/>
            <person name="Richardson D.L."/>
            <person name="Ermolaeva M.D."/>
            <person name="Vamathevan J.J."/>
            <person name="Bass S."/>
            <person name="Qin H."/>
            <person name="Dragoi I."/>
            <person name="Sellers P."/>
            <person name="McDonald L.A."/>
            <person name="Utterback T.R."/>
            <person name="Fleischmann R.D."/>
            <person name="Nierman W.C."/>
            <person name="White O."/>
            <person name="Salzberg S.L."/>
            <person name="Smith H.O."/>
            <person name="Colwell R.R."/>
            <person name="Mekalanos J.J."/>
            <person name="Venter J.C."/>
            <person name="Fraser C.M."/>
        </authorList>
    </citation>
    <scope>NUCLEOTIDE SEQUENCE [LARGE SCALE GENOMIC DNA]</scope>
    <source>
        <strain>ATCC 39315 / El Tor Inaba N16961</strain>
    </source>
</reference>
<gene>
    <name type="ordered locus">VC_A0850</name>
</gene>
<feature type="chain" id="PRO_0000081373" description="Uncharacterized response regulatory protein VC_A0850">
    <location>
        <begin position="1"/>
        <end position="261"/>
    </location>
</feature>
<feature type="domain" description="Response regulatory" evidence="2">
    <location>
        <begin position="7"/>
        <end position="122"/>
    </location>
</feature>
<feature type="domain" description="HTH LytTR-type" evidence="1">
    <location>
        <begin position="157"/>
        <end position="261"/>
    </location>
</feature>
<feature type="modified residue" description="4-aspartylphosphate" evidence="2">
    <location>
        <position position="54"/>
    </location>
</feature>
<sequence length="261" mass="29945">MMNQTYTAVLADDEPLLRHHLNKLLAELWPALEIVASAENGQIALQAIEQHQPDVVFLDIRMPKMDGIEVARRLLQQPKVPLVVFITAYDEYAVSAFETHAIDYLLKPLSSSRLASCCEKLQQQLRRNVAPSNDLAQLMSQFEQLTRTVKPQYQVWLKASKGEEIHLIAVNELLYVKAEDKYLSLYKVHGATTHEYLLRSSLKELLAQLDPNQFWQIHRSIVVNVGKIDKVTRDFGGKMWVHIDRLQLPVSRALQHLFKVS</sequence>
<organism>
    <name type="scientific">Vibrio cholerae serotype O1 (strain ATCC 39315 / El Tor Inaba N16961)</name>
    <dbReference type="NCBI Taxonomy" id="243277"/>
    <lineage>
        <taxon>Bacteria</taxon>
        <taxon>Pseudomonadati</taxon>
        <taxon>Pseudomonadota</taxon>
        <taxon>Gammaproteobacteria</taxon>
        <taxon>Vibrionales</taxon>
        <taxon>Vibrionaceae</taxon>
        <taxon>Vibrio</taxon>
    </lineage>
</organism>
<protein>
    <recommendedName>
        <fullName>Uncharacterized response regulatory protein VC_A0850</fullName>
    </recommendedName>
</protein>
<name>Y0G0_VIBCH</name>
<evidence type="ECO:0000255" key="1">
    <source>
        <dbReference type="PROSITE-ProRule" id="PRU00112"/>
    </source>
</evidence>
<evidence type="ECO:0000255" key="2">
    <source>
        <dbReference type="PROSITE-ProRule" id="PRU00169"/>
    </source>
</evidence>
<dbReference type="EMBL" id="AE003853">
    <property type="protein sequence ID" value="AAF96748.1"/>
    <property type="molecule type" value="Genomic_DNA"/>
</dbReference>
<dbReference type="PIR" id="H82407">
    <property type="entry name" value="H82407"/>
</dbReference>
<dbReference type="RefSeq" id="NP_233236.1">
    <property type="nucleotide sequence ID" value="NC_002506.1"/>
</dbReference>
<dbReference type="RefSeq" id="WP_000981879.1">
    <property type="nucleotide sequence ID" value="NZ_LT906615.1"/>
</dbReference>
<dbReference type="SMR" id="Q9KL96"/>
<dbReference type="STRING" id="243277.VC_A0850"/>
<dbReference type="DNASU" id="2612400"/>
<dbReference type="EnsemblBacteria" id="AAF96748">
    <property type="protein sequence ID" value="AAF96748"/>
    <property type="gene ID" value="VC_A0850"/>
</dbReference>
<dbReference type="KEGG" id="vch:VC_A0850"/>
<dbReference type="PATRIC" id="fig|243277.26.peg.3466"/>
<dbReference type="eggNOG" id="COG3279">
    <property type="taxonomic scope" value="Bacteria"/>
</dbReference>
<dbReference type="HOGENOM" id="CLU_000445_14_1_6"/>
<dbReference type="Proteomes" id="UP000000584">
    <property type="component" value="Chromosome 2"/>
</dbReference>
<dbReference type="GO" id="GO:0005829">
    <property type="term" value="C:cytosol"/>
    <property type="evidence" value="ECO:0000318"/>
    <property type="project" value="GO_Central"/>
</dbReference>
<dbReference type="GO" id="GO:0032993">
    <property type="term" value="C:protein-DNA complex"/>
    <property type="evidence" value="ECO:0000318"/>
    <property type="project" value="GO_Central"/>
</dbReference>
<dbReference type="GO" id="GO:0000156">
    <property type="term" value="F:phosphorelay response regulator activity"/>
    <property type="evidence" value="ECO:0000318"/>
    <property type="project" value="GO_Central"/>
</dbReference>
<dbReference type="GO" id="GO:0000976">
    <property type="term" value="F:transcription cis-regulatory region binding"/>
    <property type="evidence" value="ECO:0000318"/>
    <property type="project" value="GO_Central"/>
</dbReference>
<dbReference type="GO" id="GO:0006355">
    <property type="term" value="P:regulation of DNA-templated transcription"/>
    <property type="evidence" value="ECO:0000318"/>
    <property type="project" value="GO_Central"/>
</dbReference>
<dbReference type="CDD" id="cd17532">
    <property type="entry name" value="REC_LytTR_AlgR-like"/>
    <property type="match status" value="1"/>
</dbReference>
<dbReference type="FunFam" id="3.40.50.2300:FF:000051">
    <property type="entry name" value="Two-component response regulator yehT"/>
    <property type="match status" value="1"/>
</dbReference>
<dbReference type="Gene3D" id="3.40.50.2300">
    <property type="match status" value="1"/>
</dbReference>
<dbReference type="Gene3D" id="2.40.50.1020">
    <property type="entry name" value="LytTr DNA-binding domain"/>
    <property type="match status" value="1"/>
</dbReference>
<dbReference type="InterPro" id="IPR011006">
    <property type="entry name" value="CheY-like_superfamily"/>
</dbReference>
<dbReference type="InterPro" id="IPR007492">
    <property type="entry name" value="LytTR_DNA-bd_dom"/>
</dbReference>
<dbReference type="InterPro" id="IPR001789">
    <property type="entry name" value="Sig_transdc_resp-reg_receiver"/>
</dbReference>
<dbReference type="InterPro" id="IPR039420">
    <property type="entry name" value="WalR-like"/>
</dbReference>
<dbReference type="PANTHER" id="PTHR48111">
    <property type="entry name" value="REGULATOR OF RPOS"/>
    <property type="match status" value="1"/>
</dbReference>
<dbReference type="PANTHER" id="PTHR48111:SF69">
    <property type="entry name" value="RESPONSE REGULATOR RECEIVER"/>
    <property type="match status" value="1"/>
</dbReference>
<dbReference type="Pfam" id="PF04397">
    <property type="entry name" value="LytTR"/>
    <property type="match status" value="1"/>
</dbReference>
<dbReference type="Pfam" id="PF00072">
    <property type="entry name" value="Response_reg"/>
    <property type="match status" value="1"/>
</dbReference>
<dbReference type="SMART" id="SM00850">
    <property type="entry name" value="LytTR"/>
    <property type="match status" value="1"/>
</dbReference>
<dbReference type="SMART" id="SM00448">
    <property type="entry name" value="REC"/>
    <property type="match status" value="1"/>
</dbReference>
<dbReference type="SUPFAM" id="SSF52172">
    <property type="entry name" value="CheY-like"/>
    <property type="match status" value="1"/>
</dbReference>
<dbReference type="PROSITE" id="PS50930">
    <property type="entry name" value="HTH_LYTTR"/>
    <property type="match status" value="1"/>
</dbReference>
<dbReference type="PROSITE" id="PS50110">
    <property type="entry name" value="RESPONSE_REGULATORY"/>
    <property type="match status" value="1"/>
</dbReference>
<proteinExistence type="inferred from homology"/>
<keyword id="KW-0238">DNA-binding</keyword>
<keyword id="KW-0597">Phosphoprotein</keyword>
<keyword id="KW-1185">Reference proteome</keyword>
<keyword id="KW-0804">Transcription</keyword>
<keyword id="KW-0805">Transcription regulation</keyword>
<keyword id="KW-0902">Two-component regulatory system</keyword>
<accession>Q9KL96</accession>